<protein>
    <recommendedName>
        <fullName>E3 ubiquitin-protein ligase RNF166</fullName>
        <ecNumber>2.3.2.27</ecNumber>
    </recommendedName>
    <alternativeName>
        <fullName>RING finger protein 166</fullName>
    </alternativeName>
    <alternativeName>
        <fullName>RING-type E3 ubiquitin transferase RNF166</fullName>
    </alternativeName>
</protein>
<name>RN166_RAT</name>
<dbReference type="EC" id="2.3.2.27"/>
<dbReference type="EMBL" id="AY606065">
    <property type="protein sequence ID" value="AAT36621.1"/>
    <property type="molecule type" value="mRNA"/>
</dbReference>
<dbReference type="EMBL" id="BC100057">
    <property type="protein sequence ID" value="AAI00058.1"/>
    <property type="molecule type" value="mRNA"/>
</dbReference>
<dbReference type="RefSeq" id="NP_001002279.1">
    <property type="nucleotide sequence ID" value="NM_001002279.1"/>
</dbReference>
<dbReference type="SMR" id="Q6J1I7"/>
<dbReference type="FunCoup" id="Q6J1I7">
    <property type="interactions" value="1316"/>
</dbReference>
<dbReference type="STRING" id="10116.ENSRNOP00000018591"/>
<dbReference type="PhosphoSitePlus" id="Q6J1I7"/>
<dbReference type="PaxDb" id="10116-ENSRNOP00000018591"/>
<dbReference type="Ensembl" id="ENSRNOT00000018591.4">
    <property type="protein sequence ID" value="ENSRNOP00000018591.2"/>
    <property type="gene ID" value="ENSRNOG00000013777.4"/>
</dbReference>
<dbReference type="GeneID" id="365022"/>
<dbReference type="KEGG" id="rno:365022"/>
<dbReference type="UCSC" id="RGD:1302950">
    <property type="organism name" value="rat"/>
</dbReference>
<dbReference type="AGR" id="RGD:1302950"/>
<dbReference type="CTD" id="115992"/>
<dbReference type="RGD" id="1302950">
    <property type="gene designation" value="Rnf166"/>
</dbReference>
<dbReference type="eggNOG" id="ENOG502RB47">
    <property type="taxonomic scope" value="Eukaryota"/>
</dbReference>
<dbReference type="GeneTree" id="ENSGT00950000182909"/>
<dbReference type="HOGENOM" id="CLU_092448_1_0_1"/>
<dbReference type="InParanoid" id="Q6J1I7"/>
<dbReference type="OMA" id="AHTFCGD"/>
<dbReference type="OrthoDB" id="6270329at2759"/>
<dbReference type="PhylomeDB" id="Q6J1I7"/>
<dbReference type="TreeFam" id="TF331012"/>
<dbReference type="UniPathway" id="UPA00143"/>
<dbReference type="PRO" id="PR:Q6J1I7"/>
<dbReference type="Proteomes" id="UP000002494">
    <property type="component" value="Chromosome 19"/>
</dbReference>
<dbReference type="Bgee" id="ENSRNOG00000013777">
    <property type="expression patterns" value="Expressed in testis and 19 other cell types or tissues"/>
</dbReference>
<dbReference type="GO" id="GO:0005737">
    <property type="term" value="C:cytoplasm"/>
    <property type="evidence" value="ECO:0007669"/>
    <property type="project" value="UniProtKB-SubCell"/>
</dbReference>
<dbReference type="GO" id="GO:0061630">
    <property type="term" value="F:ubiquitin protein ligase activity"/>
    <property type="evidence" value="ECO:0000318"/>
    <property type="project" value="GO_Central"/>
</dbReference>
<dbReference type="GO" id="GO:0008270">
    <property type="term" value="F:zinc ion binding"/>
    <property type="evidence" value="ECO:0007669"/>
    <property type="project" value="UniProtKB-KW"/>
</dbReference>
<dbReference type="GO" id="GO:0006914">
    <property type="term" value="P:autophagy"/>
    <property type="evidence" value="ECO:0007669"/>
    <property type="project" value="UniProtKB-KW"/>
</dbReference>
<dbReference type="GO" id="GO:0045087">
    <property type="term" value="P:innate immune response"/>
    <property type="evidence" value="ECO:0007669"/>
    <property type="project" value="UniProtKB-KW"/>
</dbReference>
<dbReference type="GO" id="GO:0000209">
    <property type="term" value="P:protein polyubiquitination"/>
    <property type="evidence" value="ECO:0000318"/>
    <property type="project" value="GO_Central"/>
</dbReference>
<dbReference type="GO" id="GO:0006511">
    <property type="term" value="P:ubiquitin-dependent protein catabolic process"/>
    <property type="evidence" value="ECO:0000318"/>
    <property type="project" value="GO_Central"/>
</dbReference>
<dbReference type="CDD" id="cd16549">
    <property type="entry name" value="RING-HC_RNF166"/>
    <property type="match status" value="1"/>
</dbReference>
<dbReference type="Gene3D" id="3.30.40.10">
    <property type="entry name" value="Zinc/RING finger domain, C3HC4 (zinc finger)"/>
    <property type="match status" value="1"/>
</dbReference>
<dbReference type="InterPro" id="IPR008598">
    <property type="entry name" value="Di19_Zn-bd"/>
</dbReference>
<dbReference type="InterPro" id="IPR051438">
    <property type="entry name" value="RNF_E3_ubiq-protein_ligase"/>
</dbReference>
<dbReference type="InterPro" id="IPR034734">
    <property type="entry name" value="ZF_C2HC_RNF"/>
</dbReference>
<dbReference type="InterPro" id="IPR027370">
    <property type="entry name" value="Znf-RING_euk"/>
</dbReference>
<dbReference type="InterPro" id="IPR001841">
    <property type="entry name" value="Znf_RING"/>
</dbReference>
<dbReference type="InterPro" id="IPR013083">
    <property type="entry name" value="Znf_RING/FYVE/PHD"/>
</dbReference>
<dbReference type="InterPro" id="IPR017907">
    <property type="entry name" value="Znf_RING_CS"/>
</dbReference>
<dbReference type="PANTHER" id="PTHR46016:SF4">
    <property type="entry name" value="E3 UBIQUITIN-PROTEIN LIGASE RNF166"/>
    <property type="match status" value="1"/>
</dbReference>
<dbReference type="PANTHER" id="PTHR46016">
    <property type="entry name" value="ZINC FINGER, RING/FYVE/PHD-TYPE"/>
    <property type="match status" value="1"/>
</dbReference>
<dbReference type="Pfam" id="PF05605">
    <property type="entry name" value="zf-Di19"/>
    <property type="match status" value="1"/>
</dbReference>
<dbReference type="Pfam" id="PF13445">
    <property type="entry name" value="zf-RING_UBOX"/>
    <property type="match status" value="1"/>
</dbReference>
<dbReference type="Pfam" id="PF18574">
    <property type="entry name" value="zf_C2HC_14"/>
    <property type="match status" value="1"/>
</dbReference>
<dbReference type="SMART" id="SM00184">
    <property type="entry name" value="RING"/>
    <property type="match status" value="1"/>
</dbReference>
<dbReference type="SUPFAM" id="SSF57850">
    <property type="entry name" value="RING/U-box"/>
    <property type="match status" value="1"/>
</dbReference>
<dbReference type="PROSITE" id="PS51803">
    <property type="entry name" value="ZF_C2HC_RNF"/>
    <property type="match status" value="1"/>
</dbReference>
<dbReference type="PROSITE" id="PS00518">
    <property type="entry name" value="ZF_RING_1"/>
    <property type="match status" value="1"/>
</dbReference>
<dbReference type="PROSITE" id="PS50089">
    <property type="entry name" value="ZF_RING_2"/>
    <property type="match status" value="1"/>
</dbReference>
<keyword id="KW-0072">Autophagy</keyword>
<keyword id="KW-0963">Cytoplasm</keyword>
<keyword id="KW-0391">Immunity</keyword>
<keyword id="KW-0399">Innate immunity</keyword>
<keyword id="KW-0479">Metal-binding</keyword>
<keyword id="KW-1185">Reference proteome</keyword>
<keyword id="KW-0808">Transferase</keyword>
<keyword id="KW-0833">Ubl conjugation pathway</keyword>
<keyword id="KW-0862">Zinc</keyword>
<keyword id="KW-0863">Zinc-finger</keyword>
<gene>
    <name type="primary">Rnf166</name>
</gene>
<accession>Q6J1I7</accession>
<feature type="chain" id="PRO_0000245590" description="E3 ubiquitin-protein ligase RNF166">
    <location>
        <begin position="1"/>
        <end position="237"/>
    </location>
</feature>
<feature type="domain" description="UIM" evidence="4">
    <location>
        <begin position="221"/>
        <end position="237"/>
    </location>
</feature>
<feature type="zinc finger region" description="RING-type" evidence="2">
    <location>
        <begin position="33"/>
        <end position="73"/>
    </location>
</feature>
<feature type="zinc finger region" description="C2HC RNF-type" evidence="3">
    <location>
        <begin position="98"/>
        <end position="117"/>
    </location>
</feature>
<feature type="binding site" evidence="3">
    <location>
        <position position="98"/>
    </location>
    <ligand>
        <name>Zn(2+)</name>
        <dbReference type="ChEBI" id="CHEBI:29105"/>
    </ligand>
</feature>
<feature type="binding site" evidence="3">
    <location>
        <position position="101"/>
    </location>
    <ligand>
        <name>Zn(2+)</name>
        <dbReference type="ChEBI" id="CHEBI:29105"/>
    </ligand>
</feature>
<feature type="binding site" evidence="3">
    <location>
        <position position="113"/>
    </location>
    <ligand>
        <name>Zn(2+)</name>
        <dbReference type="ChEBI" id="CHEBI:29105"/>
    </ligand>
</feature>
<feature type="binding site" evidence="3">
    <location>
        <position position="117"/>
    </location>
    <ligand>
        <name>Zn(2+)</name>
        <dbReference type="ChEBI" id="CHEBI:29105"/>
    </ligand>
</feature>
<organism>
    <name type="scientific">Rattus norvegicus</name>
    <name type="common">Rat</name>
    <dbReference type="NCBI Taxonomy" id="10116"/>
    <lineage>
        <taxon>Eukaryota</taxon>
        <taxon>Metazoa</taxon>
        <taxon>Chordata</taxon>
        <taxon>Craniata</taxon>
        <taxon>Vertebrata</taxon>
        <taxon>Euteleostomi</taxon>
        <taxon>Mammalia</taxon>
        <taxon>Eutheria</taxon>
        <taxon>Euarchontoglires</taxon>
        <taxon>Glires</taxon>
        <taxon>Rodentia</taxon>
        <taxon>Myomorpha</taxon>
        <taxon>Muroidea</taxon>
        <taxon>Muridae</taxon>
        <taxon>Murinae</taxon>
        <taxon>Rattus</taxon>
    </lineage>
</organism>
<proteinExistence type="evidence at transcript level"/>
<comment type="function">
    <text evidence="1">E3 ubiquitin-protein ligase that promotes the ubiquitination of different substrates. In turn, participates in different biological processes including interferon production or autophagy. Plays a role in the activation of RNA virus-induced interferon-beta production by promoting the ubiquitination of TRAF3 and TRAF6. Also plays a role in the early recruitment of autophagy adapters to bacteria. Mediates 'Lys-29' and 'Lys-33'-linked ubiquitination of SQSTM1 leading to xenophagic targeting of bacteria and inhibition of their replication.</text>
</comment>
<comment type="catalytic activity">
    <reaction evidence="1">
        <text>S-ubiquitinyl-[E2 ubiquitin-conjugating enzyme]-L-cysteine + [acceptor protein]-L-lysine = [E2 ubiquitin-conjugating enzyme]-L-cysteine + N(6)-ubiquitinyl-[acceptor protein]-L-lysine.</text>
        <dbReference type="EC" id="2.3.2.27"/>
    </reaction>
</comment>
<comment type="pathway">
    <text evidence="1">Protein modification; protein ubiquitination.</text>
</comment>
<comment type="subcellular location">
    <subcellularLocation>
        <location evidence="1">Cytoplasm</location>
    </subcellularLocation>
</comment>
<evidence type="ECO:0000250" key="1">
    <source>
        <dbReference type="UniProtKB" id="Q96A37"/>
    </source>
</evidence>
<evidence type="ECO:0000255" key="2">
    <source>
        <dbReference type="PROSITE-ProRule" id="PRU00175"/>
    </source>
</evidence>
<evidence type="ECO:0000255" key="3">
    <source>
        <dbReference type="PROSITE-ProRule" id="PRU01144"/>
    </source>
</evidence>
<evidence type="ECO:0000305" key="4"/>
<reference key="1">
    <citation type="submission" date="2004-04" db="EMBL/GenBank/DDBJ databases">
        <title>Molecular cloning of a novel rat zinc finger protein gene.</title>
        <authorList>
            <person name="Ma Y."/>
            <person name="Wang C."/>
            <person name="Wu Q."/>
            <person name="Zhang S.Z."/>
            <person name="Hong Z."/>
            <person name="Li N."/>
            <person name="Peng Y."/>
        </authorList>
    </citation>
    <scope>NUCLEOTIDE SEQUENCE [MRNA]</scope>
    <source>
        <strain>Sprague-Dawley</strain>
    </source>
</reference>
<reference key="2">
    <citation type="journal article" date="2004" name="Genome Res.">
        <title>The status, quality, and expansion of the NIH full-length cDNA project: the Mammalian Gene Collection (MGC).</title>
        <authorList>
            <consortium name="The MGC Project Team"/>
        </authorList>
    </citation>
    <scope>NUCLEOTIDE SEQUENCE [LARGE SCALE MRNA]</scope>
    <source>
        <tissue>Testis</tissue>
    </source>
</reference>
<sequence length="237" mass="26064">MAMFRSLVASAQQRQPPAGPAGGDSGLEAQFSCPICLEVYHRPVAIGSCGHTFCGECLQPCLQVPSPLCPLCRLPFDPKKVDKATHVEKQLSSYKAPCRGCNKKVTLAKMRAHISSCLKVQEQMANCPKFVPVVPTSQPIPSNIPNRSTFACPYCGARNLDQQELVKHCVESHRSDPNRVVCPICSAMPWGDPSYKSANFLQHLLHRHKFSYDTFVDYSIDEEAAFQAALALSLSEN</sequence>